<organism>
    <name type="scientific">Streptococcus thermophilus (strain CNRZ 1066)</name>
    <dbReference type="NCBI Taxonomy" id="299768"/>
    <lineage>
        <taxon>Bacteria</taxon>
        <taxon>Bacillati</taxon>
        <taxon>Bacillota</taxon>
        <taxon>Bacilli</taxon>
        <taxon>Lactobacillales</taxon>
        <taxon>Streptococcaceae</taxon>
        <taxon>Streptococcus</taxon>
    </lineage>
</organism>
<feature type="chain" id="PRO_1000018795" description="Phosphoribosylaminoimidazole-succinocarboxamide synthase">
    <location>
        <begin position="1"/>
        <end position="235"/>
    </location>
</feature>
<evidence type="ECO:0000255" key="1">
    <source>
        <dbReference type="HAMAP-Rule" id="MF_00137"/>
    </source>
</evidence>
<reference key="1">
    <citation type="journal article" date="2004" name="Nat. Biotechnol.">
        <title>Complete sequence and comparative genome analysis of the dairy bacterium Streptococcus thermophilus.</title>
        <authorList>
            <person name="Bolotin A."/>
            <person name="Quinquis B."/>
            <person name="Renault P."/>
            <person name="Sorokin A."/>
            <person name="Ehrlich S.D."/>
            <person name="Kulakauskas S."/>
            <person name="Lapidus A."/>
            <person name="Goltsman E."/>
            <person name="Mazur M."/>
            <person name="Pusch G.D."/>
            <person name="Fonstein M."/>
            <person name="Overbeek R."/>
            <person name="Kyprides N."/>
            <person name="Purnelle B."/>
            <person name="Prozzi D."/>
            <person name="Ngui K."/>
            <person name="Masuy D."/>
            <person name="Hancy F."/>
            <person name="Burteau S."/>
            <person name="Boutry M."/>
            <person name="Delcour J."/>
            <person name="Goffeau A."/>
            <person name="Hols P."/>
        </authorList>
    </citation>
    <scope>NUCLEOTIDE SEQUENCE [LARGE SCALE GENOMIC DNA]</scope>
    <source>
        <strain>CNRZ 1066</strain>
    </source>
</reference>
<dbReference type="EC" id="6.3.2.6" evidence="1"/>
<dbReference type="EMBL" id="CP000024">
    <property type="protein sequence ID" value="AAV61648.1"/>
    <property type="molecule type" value="Genomic_DNA"/>
</dbReference>
<dbReference type="RefSeq" id="WP_011226729.1">
    <property type="nucleotide sequence ID" value="NC_006449.1"/>
</dbReference>
<dbReference type="SMR" id="Q5M206"/>
<dbReference type="KEGG" id="stc:str0030"/>
<dbReference type="HOGENOM" id="CLU_061495_2_0_9"/>
<dbReference type="UniPathway" id="UPA00074">
    <property type="reaction ID" value="UER00131"/>
</dbReference>
<dbReference type="GO" id="GO:0005524">
    <property type="term" value="F:ATP binding"/>
    <property type="evidence" value="ECO:0007669"/>
    <property type="project" value="UniProtKB-KW"/>
</dbReference>
<dbReference type="GO" id="GO:0004639">
    <property type="term" value="F:phosphoribosylaminoimidazolesuccinocarboxamide synthase activity"/>
    <property type="evidence" value="ECO:0007669"/>
    <property type="project" value="UniProtKB-UniRule"/>
</dbReference>
<dbReference type="GO" id="GO:0006189">
    <property type="term" value="P:'de novo' IMP biosynthetic process"/>
    <property type="evidence" value="ECO:0007669"/>
    <property type="project" value="UniProtKB-UniRule"/>
</dbReference>
<dbReference type="GO" id="GO:0009236">
    <property type="term" value="P:cobalamin biosynthetic process"/>
    <property type="evidence" value="ECO:0007669"/>
    <property type="project" value="InterPro"/>
</dbReference>
<dbReference type="CDD" id="cd01415">
    <property type="entry name" value="SAICAR_synt_PurC"/>
    <property type="match status" value="1"/>
</dbReference>
<dbReference type="FunFam" id="3.30.200.20:FF:000189">
    <property type="entry name" value="Phosphoribosylaminoimidazole-succinocarboxamide synthase"/>
    <property type="match status" value="1"/>
</dbReference>
<dbReference type="FunFam" id="3.30.470.20:FF:000006">
    <property type="entry name" value="Phosphoribosylaminoimidazole-succinocarboxamide synthase"/>
    <property type="match status" value="1"/>
</dbReference>
<dbReference type="Gene3D" id="3.30.470.20">
    <property type="entry name" value="ATP-grasp fold, B domain"/>
    <property type="match status" value="1"/>
</dbReference>
<dbReference type="Gene3D" id="3.30.200.20">
    <property type="entry name" value="Phosphorylase Kinase, domain 1"/>
    <property type="match status" value="1"/>
</dbReference>
<dbReference type="HAMAP" id="MF_00137">
    <property type="entry name" value="SAICAR_synth"/>
    <property type="match status" value="1"/>
</dbReference>
<dbReference type="InterPro" id="IPR028923">
    <property type="entry name" value="SAICAR_synt/ADE2_N"/>
</dbReference>
<dbReference type="InterPro" id="IPR033934">
    <property type="entry name" value="SAICAR_synt_PurC"/>
</dbReference>
<dbReference type="InterPro" id="IPR001636">
    <property type="entry name" value="SAICAR_synth"/>
</dbReference>
<dbReference type="InterPro" id="IPR050089">
    <property type="entry name" value="SAICAR_synthetase"/>
</dbReference>
<dbReference type="InterPro" id="IPR018236">
    <property type="entry name" value="SAICAR_synthetase_CS"/>
</dbReference>
<dbReference type="NCBIfam" id="TIGR00081">
    <property type="entry name" value="purC"/>
    <property type="match status" value="1"/>
</dbReference>
<dbReference type="PANTHER" id="PTHR43599">
    <property type="entry name" value="MULTIFUNCTIONAL PROTEIN ADE2"/>
    <property type="match status" value="1"/>
</dbReference>
<dbReference type="PANTHER" id="PTHR43599:SF3">
    <property type="entry name" value="SI:DKEY-6E2.2"/>
    <property type="match status" value="1"/>
</dbReference>
<dbReference type="Pfam" id="PF01259">
    <property type="entry name" value="SAICAR_synt"/>
    <property type="match status" value="1"/>
</dbReference>
<dbReference type="SUPFAM" id="SSF56104">
    <property type="entry name" value="SAICAR synthase-like"/>
    <property type="match status" value="1"/>
</dbReference>
<dbReference type="PROSITE" id="PS01057">
    <property type="entry name" value="SAICAR_SYNTHETASE_1"/>
    <property type="match status" value="1"/>
</dbReference>
<dbReference type="PROSITE" id="PS01058">
    <property type="entry name" value="SAICAR_SYNTHETASE_2"/>
    <property type="match status" value="1"/>
</dbReference>
<gene>
    <name evidence="1" type="primary">purC</name>
    <name type="ordered locus">str0030</name>
</gene>
<name>PUR7_STRT1</name>
<comment type="catalytic activity">
    <reaction evidence="1">
        <text>5-amino-1-(5-phospho-D-ribosyl)imidazole-4-carboxylate + L-aspartate + ATP = (2S)-2-[5-amino-1-(5-phospho-beta-D-ribosyl)imidazole-4-carboxamido]succinate + ADP + phosphate + 2 H(+)</text>
        <dbReference type="Rhea" id="RHEA:22628"/>
        <dbReference type="ChEBI" id="CHEBI:15378"/>
        <dbReference type="ChEBI" id="CHEBI:29991"/>
        <dbReference type="ChEBI" id="CHEBI:30616"/>
        <dbReference type="ChEBI" id="CHEBI:43474"/>
        <dbReference type="ChEBI" id="CHEBI:58443"/>
        <dbReference type="ChEBI" id="CHEBI:77657"/>
        <dbReference type="ChEBI" id="CHEBI:456216"/>
        <dbReference type="EC" id="6.3.2.6"/>
    </reaction>
</comment>
<comment type="pathway">
    <text evidence="1">Purine metabolism; IMP biosynthesis via de novo pathway; 5-amino-1-(5-phospho-D-ribosyl)imidazole-4-carboxamide from 5-amino-1-(5-phospho-D-ribosyl)imidazole-4-carboxylate: step 1/2.</text>
</comment>
<comment type="similarity">
    <text evidence="1">Belongs to the SAICAR synthetase family.</text>
</comment>
<protein>
    <recommendedName>
        <fullName evidence="1">Phosphoribosylaminoimidazole-succinocarboxamide synthase</fullName>
        <ecNumber evidence="1">6.3.2.6</ecNumber>
    </recommendedName>
    <alternativeName>
        <fullName evidence="1">SAICAR synthetase</fullName>
    </alternativeName>
</protein>
<proteinExistence type="inferred from homology"/>
<sequence>MSNQLIYTGKAKDIYSTEDENVIKSVYKDQATMLNGARKETIKGKGVLNNQISSLIFEKLNAAGVATHFIERISDTEQLNKKVTIIPLEVVLRNVTAGSFSKRFGVEEGLDLKTPIVEFYYKNDDLDDPFINDEHVKFLDIANDEQIAYIKEETRRINELLKDWFEQIGLRLIDFKLEFGFDKDGKIILADEFSPDNCRLWDAEGHHMDKDVFRRDLGSLTDVYEVVLEKLQGLK</sequence>
<keyword id="KW-0067">ATP-binding</keyword>
<keyword id="KW-0436">Ligase</keyword>
<keyword id="KW-0547">Nucleotide-binding</keyword>
<keyword id="KW-0658">Purine biosynthesis</keyword>
<accession>Q5M206</accession>